<reference key="1">
    <citation type="journal article" date="2001" name="Infect. Immun.">
        <title>Motility and the polar flagellum are required for Aeromonas caviae adherence to HEp-2 cells.</title>
        <authorList>
            <person name="Rabaan A.A."/>
            <person name="Gryllos I."/>
            <person name="Tomas J.M."/>
            <person name="Shaw J.G."/>
        </authorList>
    </citation>
    <scope>NUCLEOTIDE SEQUENCE [GENOMIC DNA]</scope>
    <source>
        <strain>Sch3N</strain>
    </source>
</reference>
<protein>
    <recommendedName>
        <fullName>Flagellar hook-associated protein 2</fullName>
        <shortName>HAP2</shortName>
    </recommendedName>
    <alternativeName>
        <fullName>Filament cap protein</fullName>
    </alternativeName>
    <alternativeName>
        <fullName>Flagellar cap protein</fullName>
    </alternativeName>
</protein>
<name>FLID_AERCA</name>
<organism>
    <name type="scientific">Aeromonas caviae</name>
    <name type="common">Aeromonas punctata</name>
    <dbReference type="NCBI Taxonomy" id="648"/>
    <lineage>
        <taxon>Bacteria</taxon>
        <taxon>Pseudomonadati</taxon>
        <taxon>Pseudomonadota</taxon>
        <taxon>Gammaproteobacteria</taxon>
        <taxon>Aeromonadales</taxon>
        <taxon>Aeromonadaceae</taxon>
        <taxon>Aeromonas</taxon>
    </lineage>
</organism>
<sequence>MAITSAGAGSGIDLESVISASVSAKKAQLQQPIITKQNSTQITLSGIGQLKSSISAFTDILDKLSAPGAFNKRAINITQSKDDPILKVEGKSGASNGQYNIIVNKLAETSRQEGIFDSSTTPLATQDGQLTFKAGDKTFKVDVKAGDTLQDIRKSINSNGDNFGLSVNIVNTADGKAKLVIDSGISGDGKDLTITGDNAELGVFEAGGGVMSQTRAASSAEINVDGNVLKSDTNTFDDSIQDLKVTVLRVSDKDSAGDLKANKVDITTDKTSIQELVQQFVDGYNTLQDKMNSLGKRNTFVGGVKQDDGGALAGDSTTRAIESFMSNLLVSPSQNSGTYSTVFEIGIKMDNKGKLSLDKTKFGEAVDKNFDQVVALFGGEKGLASTLNSGLKEYTKSGGMLAQREDVLNSDLRALTQKTATANAQLTKYEAALRAQYGSLDALLVKMNSSASALATLQTSYQKS</sequence>
<accession>Q9R9R6</accession>
<dbReference type="EMBL" id="AF198617">
    <property type="protein sequence ID" value="AAF19182.1"/>
    <property type="molecule type" value="Genomic_DNA"/>
</dbReference>
<dbReference type="SMR" id="Q9R9R6"/>
<dbReference type="GO" id="GO:0009421">
    <property type="term" value="C:bacterial-type flagellum filament cap"/>
    <property type="evidence" value="ECO:0007669"/>
    <property type="project" value="InterPro"/>
</dbReference>
<dbReference type="GO" id="GO:0009424">
    <property type="term" value="C:bacterial-type flagellum hook"/>
    <property type="evidence" value="ECO:0007669"/>
    <property type="project" value="InterPro"/>
</dbReference>
<dbReference type="GO" id="GO:0005576">
    <property type="term" value="C:extracellular region"/>
    <property type="evidence" value="ECO:0007669"/>
    <property type="project" value="UniProtKB-SubCell"/>
</dbReference>
<dbReference type="GO" id="GO:0071973">
    <property type="term" value="P:bacterial-type flagellum-dependent cell motility"/>
    <property type="evidence" value="ECO:0007669"/>
    <property type="project" value="TreeGrafter"/>
</dbReference>
<dbReference type="GO" id="GO:0007155">
    <property type="term" value="P:cell adhesion"/>
    <property type="evidence" value="ECO:0007669"/>
    <property type="project" value="InterPro"/>
</dbReference>
<dbReference type="InterPro" id="IPR010810">
    <property type="entry name" value="Flagellin_hook_IN_motif"/>
</dbReference>
<dbReference type="InterPro" id="IPR040026">
    <property type="entry name" value="FliD"/>
</dbReference>
<dbReference type="InterPro" id="IPR010809">
    <property type="entry name" value="FliD_C"/>
</dbReference>
<dbReference type="InterPro" id="IPR003481">
    <property type="entry name" value="FliD_N"/>
</dbReference>
<dbReference type="PANTHER" id="PTHR30288">
    <property type="entry name" value="FLAGELLAR CAP/ASSEMBLY PROTEIN FLID"/>
    <property type="match status" value="1"/>
</dbReference>
<dbReference type="PANTHER" id="PTHR30288:SF0">
    <property type="entry name" value="FLAGELLAR HOOK-ASSOCIATED PROTEIN 2"/>
    <property type="match status" value="1"/>
</dbReference>
<dbReference type="Pfam" id="PF07196">
    <property type="entry name" value="Flagellin_IN"/>
    <property type="match status" value="1"/>
</dbReference>
<dbReference type="Pfam" id="PF07195">
    <property type="entry name" value="FliD_C"/>
    <property type="match status" value="1"/>
</dbReference>
<dbReference type="Pfam" id="PF02465">
    <property type="entry name" value="FliD_N"/>
    <property type="match status" value="1"/>
</dbReference>
<comment type="function">
    <text evidence="1">Required for the morphogenesis and for the elongation of the flagellar filament by facilitating polymerization of the flagellin monomers at the tip of growing filament. Forms a capping structure, which prevents flagellin subunits (transported through the central channel of the flagellum) from leaking out without polymerization at the distal end (By similarity).</text>
</comment>
<comment type="subunit">
    <text evidence="1">Homopentamer.</text>
</comment>
<comment type="subcellular location">
    <subcellularLocation>
        <location>Secreted</location>
    </subcellularLocation>
    <subcellularLocation>
        <location>Bacterial flagellum</location>
    </subcellularLocation>
</comment>
<comment type="similarity">
    <text evidence="3">Belongs to the FliD family.</text>
</comment>
<evidence type="ECO:0000250" key="1"/>
<evidence type="ECO:0000255" key="2"/>
<evidence type="ECO:0000305" key="3"/>
<gene>
    <name type="primary">fliD</name>
    <name type="synonym">flaH</name>
</gene>
<feature type="chain" id="PRO_0000177011" description="Flagellar hook-associated protein 2">
    <location>
        <begin position="1"/>
        <end position="464"/>
    </location>
</feature>
<feature type="coiled-coil region" evidence="2">
    <location>
        <begin position="403"/>
        <end position="436"/>
    </location>
</feature>
<keyword id="KW-0975">Bacterial flagellum</keyword>
<keyword id="KW-0175">Coiled coil</keyword>
<keyword id="KW-0964">Secreted</keyword>
<proteinExistence type="inferred from homology"/>